<organism>
    <name type="scientific">Deinococcus geothermalis (strain DSM 11300 / CIP 105573 / AG-3a)</name>
    <dbReference type="NCBI Taxonomy" id="319795"/>
    <lineage>
        <taxon>Bacteria</taxon>
        <taxon>Thermotogati</taxon>
        <taxon>Deinococcota</taxon>
        <taxon>Deinococci</taxon>
        <taxon>Deinococcales</taxon>
        <taxon>Deinococcaceae</taxon>
        <taxon>Deinococcus</taxon>
    </lineage>
</organism>
<accession>Q1IWM5</accession>
<gene>
    <name evidence="1" type="primary">argH</name>
    <name type="ordered locus">Dgeo_2065</name>
</gene>
<name>ARLY_DEIGD</name>
<reference key="1">
    <citation type="submission" date="2006-04" db="EMBL/GenBank/DDBJ databases">
        <title>Complete sequence of chromosome of Deinococcus geothermalis DSM 11300.</title>
        <authorList>
            <person name="Copeland A."/>
            <person name="Lucas S."/>
            <person name="Lapidus A."/>
            <person name="Barry K."/>
            <person name="Detter J.C."/>
            <person name="Glavina del Rio T."/>
            <person name="Hammon N."/>
            <person name="Israni S."/>
            <person name="Dalin E."/>
            <person name="Tice H."/>
            <person name="Pitluck S."/>
            <person name="Brettin T."/>
            <person name="Bruce D."/>
            <person name="Han C."/>
            <person name="Tapia R."/>
            <person name="Saunders E."/>
            <person name="Gilna P."/>
            <person name="Schmutz J."/>
            <person name="Larimer F."/>
            <person name="Land M."/>
            <person name="Hauser L."/>
            <person name="Kyrpides N."/>
            <person name="Kim E."/>
            <person name="Daly M.J."/>
            <person name="Fredrickson J.K."/>
            <person name="Makarova K.S."/>
            <person name="Gaidamakova E.K."/>
            <person name="Zhai M."/>
            <person name="Richardson P."/>
        </authorList>
    </citation>
    <scope>NUCLEOTIDE SEQUENCE [LARGE SCALE GENOMIC DNA]</scope>
    <source>
        <strain>DSM 11300 / CIP 105573 / AG-3a</strain>
    </source>
</reference>
<evidence type="ECO:0000255" key="1">
    <source>
        <dbReference type="HAMAP-Rule" id="MF_00006"/>
    </source>
</evidence>
<feature type="chain" id="PRO_1000000474" description="Argininosuccinate lyase">
    <location>
        <begin position="1"/>
        <end position="465"/>
    </location>
</feature>
<proteinExistence type="inferred from homology"/>
<sequence>MTNTTQDKKLWGGRFAEATDGLVELFNASVAFDQRLAEQDIRGSLAHVAMLGQTGILTPDEVAQIEEGLQGILADIRAGRFDWRLDREDVHMNVEAALRDRIGPVAGKLHTARSRNDQVAVDFRLFTKEAALDLAAKVRALRAVLVAEAEKHLQDEVILPGYTHLQVAQPILLSHWLMAYAAMLERDEGRFRDAAERMDESPLGSSALAGTPWPIDRFATAAALGFARPTANSLDGVGSRDFALEFLSACAILAAHLSRLSEELILYSTFEFGFLTLPDSHTTGSSIMPQKKNPDVAELARGKAGRVFGNLMGLLTVVKGTPLAYNKDLQEDKEGVFDSYDTLSIVLRLYADMLPKTVWHADVTKLAAARGFSTATDLADFLARSGVPFREAHEVVGRLVGLASRTGRQLWDLTDEELRAAHPLLSAEVARALTVEESVKSRRSYGGTAPERVREQVAAAKAALS</sequence>
<comment type="catalytic activity">
    <reaction evidence="1">
        <text>2-(N(omega)-L-arginino)succinate = fumarate + L-arginine</text>
        <dbReference type="Rhea" id="RHEA:24020"/>
        <dbReference type="ChEBI" id="CHEBI:29806"/>
        <dbReference type="ChEBI" id="CHEBI:32682"/>
        <dbReference type="ChEBI" id="CHEBI:57472"/>
        <dbReference type="EC" id="4.3.2.1"/>
    </reaction>
</comment>
<comment type="pathway">
    <text evidence="1">Amino-acid biosynthesis; L-arginine biosynthesis; L-arginine from L-ornithine and carbamoyl phosphate: step 3/3.</text>
</comment>
<comment type="subcellular location">
    <subcellularLocation>
        <location evidence="1">Cytoplasm</location>
    </subcellularLocation>
</comment>
<comment type="similarity">
    <text evidence="1">Belongs to the lyase 1 family. Argininosuccinate lyase subfamily.</text>
</comment>
<dbReference type="EC" id="4.3.2.1" evidence="1"/>
<dbReference type="EMBL" id="CP000359">
    <property type="protein sequence ID" value="ABF46359.1"/>
    <property type="molecule type" value="Genomic_DNA"/>
</dbReference>
<dbReference type="RefSeq" id="WP_011531185.1">
    <property type="nucleotide sequence ID" value="NC_008025.1"/>
</dbReference>
<dbReference type="SMR" id="Q1IWM5"/>
<dbReference type="STRING" id="319795.Dgeo_2065"/>
<dbReference type="KEGG" id="dge:Dgeo_2065"/>
<dbReference type="eggNOG" id="COG0165">
    <property type="taxonomic scope" value="Bacteria"/>
</dbReference>
<dbReference type="HOGENOM" id="CLU_027272_2_3_0"/>
<dbReference type="UniPathway" id="UPA00068">
    <property type="reaction ID" value="UER00114"/>
</dbReference>
<dbReference type="Proteomes" id="UP000002431">
    <property type="component" value="Chromosome"/>
</dbReference>
<dbReference type="GO" id="GO:0005829">
    <property type="term" value="C:cytosol"/>
    <property type="evidence" value="ECO:0007669"/>
    <property type="project" value="TreeGrafter"/>
</dbReference>
<dbReference type="GO" id="GO:0004056">
    <property type="term" value="F:argininosuccinate lyase activity"/>
    <property type="evidence" value="ECO:0007669"/>
    <property type="project" value="UniProtKB-UniRule"/>
</dbReference>
<dbReference type="GO" id="GO:0042450">
    <property type="term" value="P:arginine biosynthetic process via ornithine"/>
    <property type="evidence" value="ECO:0007669"/>
    <property type="project" value="InterPro"/>
</dbReference>
<dbReference type="GO" id="GO:0006526">
    <property type="term" value="P:L-arginine biosynthetic process"/>
    <property type="evidence" value="ECO:0007669"/>
    <property type="project" value="UniProtKB-UniRule"/>
</dbReference>
<dbReference type="CDD" id="cd01359">
    <property type="entry name" value="Argininosuccinate_lyase"/>
    <property type="match status" value="1"/>
</dbReference>
<dbReference type="FunFam" id="1.10.275.10:FF:000002">
    <property type="entry name" value="Argininosuccinate lyase"/>
    <property type="match status" value="1"/>
</dbReference>
<dbReference type="FunFam" id="1.10.40.30:FF:000001">
    <property type="entry name" value="Argininosuccinate lyase"/>
    <property type="match status" value="1"/>
</dbReference>
<dbReference type="FunFam" id="1.20.200.10:FF:000015">
    <property type="entry name" value="argininosuccinate lyase isoform X2"/>
    <property type="match status" value="1"/>
</dbReference>
<dbReference type="Gene3D" id="1.10.40.30">
    <property type="entry name" value="Fumarase/aspartase (C-terminal domain)"/>
    <property type="match status" value="1"/>
</dbReference>
<dbReference type="Gene3D" id="1.20.200.10">
    <property type="entry name" value="Fumarase/aspartase (Central domain)"/>
    <property type="match status" value="1"/>
</dbReference>
<dbReference type="Gene3D" id="1.10.275.10">
    <property type="entry name" value="Fumarase/aspartase (N-terminal domain)"/>
    <property type="match status" value="1"/>
</dbReference>
<dbReference type="HAMAP" id="MF_00006">
    <property type="entry name" value="Arg_succ_lyase"/>
    <property type="match status" value="1"/>
</dbReference>
<dbReference type="InterPro" id="IPR029419">
    <property type="entry name" value="Arg_succ_lyase_C"/>
</dbReference>
<dbReference type="InterPro" id="IPR009049">
    <property type="entry name" value="Argininosuccinate_lyase"/>
</dbReference>
<dbReference type="InterPro" id="IPR024083">
    <property type="entry name" value="Fumarase/histidase_N"/>
</dbReference>
<dbReference type="InterPro" id="IPR020557">
    <property type="entry name" value="Fumarate_lyase_CS"/>
</dbReference>
<dbReference type="InterPro" id="IPR000362">
    <property type="entry name" value="Fumarate_lyase_fam"/>
</dbReference>
<dbReference type="InterPro" id="IPR022761">
    <property type="entry name" value="Fumarate_lyase_N"/>
</dbReference>
<dbReference type="InterPro" id="IPR008948">
    <property type="entry name" value="L-Aspartase-like"/>
</dbReference>
<dbReference type="NCBIfam" id="TIGR00838">
    <property type="entry name" value="argH"/>
    <property type="match status" value="1"/>
</dbReference>
<dbReference type="PANTHER" id="PTHR43814">
    <property type="entry name" value="ARGININOSUCCINATE LYASE"/>
    <property type="match status" value="1"/>
</dbReference>
<dbReference type="PANTHER" id="PTHR43814:SF1">
    <property type="entry name" value="ARGININOSUCCINATE LYASE"/>
    <property type="match status" value="1"/>
</dbReference>
<dbReference type="Pfam" id="PF14698">
    <property type="entry name" value="ASL_C2"/>
    <property type="match status" value="1"/>
</dbReference>
<dbReference type="Pfam" id="PF00206">
    <property type="entry name" value="Lyase_1"/>
    <property type="match status" value="1"/>
</dbReference>
<dbReference type="PRINTS" id="PR00145">
    <property type="entry name" value="ARGSUCLYASE"/>
</dbReference>
<dbReference type="PRINTS" id="PR00149">
    <property type="entry name" value="FUMRATELYASE"/>
</dbReference>
<dbReference type="SUPFAM" id="SSF48557">
    <property type="entry name" value="L-aspartase-like"/>
    <property type="match status" value="1"/>
</dbReference>
<dbReference type="PROSITE" id="PS00163">
    <property type="entry name" value="FUMARATE_LYASES"/>
    <property type="match status" value="1"/>
</dbReference>
<protein>
    <recommendedName>
        <fullName evidence="1">Argininosuccinate lyase</fullName>
        <shortName evidence="1">ASAL</shortName>
        <ecNumber evidence="1">4.3.2.1</ecNumber>
    </recommendedName>
    <alternativeName>
        <fullName evidence="1">Arginosuccinase</fullName>
    </alternativeName>
</protein>
<keyword id="KW-0028">Amino-acid biosynthesis</keyword>
<keyword id="KW-0055">Arginine biosynthesis</keyword>
<keyword id="KW-0963">Cytoplasm</keyword>
<keyword id="KW-0456">Lyase</keyword>